<gene>
    <name evidence="5" type="primary">UGT71A27</name>
</gene>
<reference key="1">
    <citation type="submission" date="2014-09" db="EMBL/GenBank/DDBJ databases">
        <title>Panax ginseng UGTs increased expression level in leaf and root by MeJA.</title>
        <authorList>
            <person name="Jung S.-C."/>
            <person name="Kim W."/>
            <person name="Lim S."/>
            <person name="Choi G."/>
            <person name="Kim S.C."/>
        </authorList>
    </citation>
    <scope>NUCLEOTIDE SEQUENCE [MRNA]</scope>
</reference>
<reference key="2">
    <citation type="journal article" date="2014" name="Plant Cell Physiol.">
        <title>Two ginseng UDP-glycosyltransferases synthesize ginsenoside Rg3 and Rd.</title>
        <authorList>
            <person name="Jung S.-C."/>
            <person name="Kim W."/>
            <person name="Park S.C."/>
            <person name="Jeong J."/>
            <person name="Park M.K."/>
            <person name="Lim S."/>
            <person name="Lee Y."/>
            <person name="Im W.-T."/>
            <person name="Lee J.H."/>
            <person name="Choi G."/>
            <person name="Kim S.C."/>
        </authorList>
    </citation>
    <scope>NUCLEOTIDE SEQUENCE [GENOMIC DNA]</scope>
    <scope>FUNCTION</scope>
    <scope>CATALYTIC ACTIVITY</scope>
    <scope>INDUCTION BY METHYL JASMONATE</scope>
</reference>
<reference key="3">
    <citation type="journal article" date="2018" name="Molecules">
        <title>Progress on the studies of the key enzymes of ginsenoside biosynthesis.</title>
        <authorList>
            <person name="Yang J.-L."/>
            <person name="Hu Z.-F."/>
            <person name="Zhang T.-T."/>
            <person name="Gu A.-D."/>
            <person name="Gong T."/>
            <person name="Zhu P."/>
        </authorList>
    </citation>
    <scope>REVIEW</scope>
</reference>
<feature type="chain" id="PRO_0000446964" description="UDP-glycosyltransferase 71A27">
    <location>
        <begin position="1"/>
        <end position="473"/>
    </location>
</feature>
<feature type="active site" description="Proton acceptor" evidence="1">
    <location>
        <position position="15"/>
    </location>
</feature>
<feature type="active site" description="Charge relay" evidence="1">
    <location>
        <position position="117"/>
    </location>
</feature>
<feature type="binding site" evidence="2">
    <location>
        <position position="15"/>
    </location>
    <ligand>
        <name>an anthocyanidin</name>
        <dbReference type="ChEBI" id="CHEBI:143576"/>
    </ligand>
</feature>
<feature type="binding site" evidence="1">
    <location>
        <position position="345"/>
    </location>
    <ligand>
        <name>UDP-alpha-D-glucose</name>
        <dbReference type="ChEBI" id="CHEBI:58885"/>
    </ligand>
</feature>
<feature type="binding site" evidence="1">
    <location>
        <position position="347"/>
    </location>
    <ligand>
        <name>UDP-alpha-D-glucose</name>
        <dbReference type="ChEBI" id="CHEBI:58885"/>
    </ligand>
</feature>
<feature type="binding site" evidence="1">
    <location>
        <position position="362"/>
    </location>
    <ligand>
        <name>UDP-alpha-D-glucose</name>
        <dbReference type="ChEBI" id="CHEBI:58885"/>
    </ligand>
</feature>
<feature type="binding site" evidence="1">
    <location>
        <position position="365"/>
    </location>
    <ligand>
        <name>UDP-alpha-D-glucose</name>
        <dbReference type="ChEBI" id="CHEBI:58885"/>
    </ligand>
</feature>
<feature type="binding site" evidence="1">
    <location>
        <position position="366"/>
    </location>
    <ligand>
        <name>UDP-alpha-D-glucose</name>
        <dbReference type="ChEBI" id="CHEBI:58885"/>
    </ligand>
</feature>
<feature type="binding site" evidence="1">
    <location>
        <position position="367"/>
    </location>
    <ligand>
        <name>UDP-alpha-D-glucose</name>
        <dbReference type="ChEBI" id="CHEBI:58885"/>
    </ligand>
</feature>
<feature type="binding site" evidence="1">
    <location>
        <position position="370"/>
    </location>
    <ligand>
        <name>UDP-alpha-D-glucose</name>
        <dbReference type="ChEBI" id="CHEBI:58885"/>
    </ligand>
</feature>
<feature type="binding site" evidence="2">
    <location>
        <position position="385"/>
    </location>
    <ligand>
        <name>an anthocyanidin</name>
        <dbReference type="ChEBI" id="CHEBI:143576"/>
    </ligand>
</feature>
<feature type="binding site" evidence="1">
    <location>
        <position position="386"/>
    </location>
    <ligand>
        <name>UDP-alpha-D-glucose</name>
        <dbReference type="ChEBI" id="CHEBI:58885"/>
    </ligand>
</feature>
<feature type="binding site" evidence="1">
    <location>
        <position position="387"/>
    </location>
    <ligand>
        <name>UDP-alpha-D-glucose</name>
        <dbReference type="ChEBI" id="CHEBI:58885"/>
    </ligand>
</feature>
<evidence type="ECO:0000250" key="1">
    <source>
        <dbReference type="UniProtKB" id="A0A0A1HA03"/>
    </source>
</evidence>
<evidence type="ECO:0000250" key="2">
    <source>
        <dbReference type="UniProtKB" id="P51094"/>
    </source>
</evidence>
<evidence type="ECO:0000269" key="3">
    <source>
    </source>
</evidence>
<evidence type="ECO:0000303" key="4">
    <source>
    </source>
</evidence>
<evidence type="ECO:0000303" key="5">
    <source ref="1"/>
</evidence>
<evidence type="ECO:0000305" key="6"/>
<name>U71A2_PANGI</name>
<keyword id="KW-0414">Isoprene biosynthesis</keyword>
<keyword id="KW-0808">Transferase</keyword>
<accession>A0A0A7HB61</accession>
<comment type="function">
    <text evidence="4">Component of the triterpene saponins (e.g. PPD-type ginsenosides or panaxosides) biosynthetic pathways (PubMed:25320211). Glycosyltransferase that catalyzes the biosynthesis of compound K from protopanaxadiol (PPD) (PubMed:25320211).</text>
</comment>
<comment type="catalytic activity">
    <reaction evidence="3">
        <text>(20S)-protopanaxadiol + UDP-alpha-D-glucose = (20S)-ginsenoside C-K + UDP + H(+)</text>
        <dbReference type="Rhea" id="RHEA:57976"/>
        <dbReference type="ChEBI" id="CHEBI:15378"/>
        <dbReference type="ChEBI" id="CHEBI:58223"/>
        <dbReference type="ChEBI" id="CHEBI:58885"/>
        <dbReference type="ChEBI" id="CHEBI:75950"/>
        <dbReference type="ChEBI" id="CHEBI:77146"/>
        <dbReference type="EC" id="2.4.1.363"/>
    </reaction>
    <physiologicalReaction direction="left-to-right" evidence="3">
        <dbReference type="Rhea" id="RHEA:57977"/>
    </physiologicalReaction>
</comment>
<comment type="pathway">
    <text evidence="6">Secondary metabolite biosynthesis; terpenoid biosynthesis.</text>
</comment>
<comment type="induction">
    <text evidence="3">Induced by methyl jasmonate (MeJA).</text>
</comment>
<comment type="similarity">
    <text evidence="6">Belongs to the UDP-glycosyltransferase family.</text>
</comment>
<organism>
    <name type="scientific">Panax ginseng</name>
    <name type="common">Korean ginseng</name>
    <dbReference type="NCBI Taxonomy" id="4054"/>
    <lineage>
        <taxon>Eukaryota</taxon>
        <taxon>Viridiplantae</taxon>
        <taxon>Streptophyta</taxon>
        <taxon>Embryophyta</taxon>
        <taxon>Tracheophyta</taxon>
        <taxon>Spermatophyta</taxon>
        <taxon>Magnoliopsida</taxon>
        <taxon>eudicotyledons</taxon>
        <taxon>Gunneridae</taxon>
        <taxon>Pentapetalae</taxon>
        <taxon>asterids</taxon>
        <taxon>campanulids</taxon>
        <taxon>Apiales</taxon>
        <taxon>Araliaceae</taxon>
        <taxon>Panax</taxon>
    </lineage>
</organism>
<proteinExistence type="evidence at protein level"/>
<sequence length="473" mass="53230">MKSELIFLPAPAIGHLVGMVEMAKLFISRHENLSVTVLIAKFYMDTGVDNYNKSLLTNPTPRLTIVNLPETDPQNYMLKPRHAIFPSVIETQKTHVRDIISGMTQSESTRVVGLLADLLFINIMDIANEFNVPTYVYSPAGAGHLGLAFHLQTLNDKKQDVTEFRNSDTELLVPSFANPVPAEVLPSMYVDKEGGYDYLFSLFRRCRESKAIIINTFEELEPYAINSLRMDSMIPPIYPVGPILNLNGDGQNSDEAAVILGWLDDQPPSSVVFLCFGSYGSFQENQVKEIAMGLERSGHRFLWSLRPSIPKGETKLQLKYSNLKEILPVGFLDRTSCVGKVIGWAPQVAVLAHKAVGGFVSHCGWNSILESVWYDMSVATWPMYGEQQLNAFEMVKELGLAVEIEVDYRNEYNKTGFIVRADEIETKIKKLMMDEKNSEIRKKVKEMKEKSRVAMSENGSSYTSLAKLFEKIM</sequence>
<protein>
    <recommendedName>
        <fullName evidence="5">UDP-glycosyltransferase 71A27</fullName>
        <shortName evidence="5">PgUGT71A27</shortName>
        <ecNumber evidence="3">2.4.1.363</ecNumber>
    </recommendedName>
</protein>
<dbReference type="EC" id="2.4.1.363" evidence="3"/>
<dbReference type="EMBL" id="KM491309">
    <property type="protein sequence ID" value="AIZ00429.1"/>
    <property type="molecule type" value="mRNA"/>
</dbReference>
<dbReference type="SMR" id="A0A0A7HB61"/>
<dbReference type="BioCyc" id="MetaCyc:MONOMER-20532"/>
<dbReference type="UniPathway" id="UPA00213"/>
<dbReference type="GO" id="GO:0035251">
    <property type="term" value="F:UDP-glucosyltransferase activity"/>
    <property type="evidence" value="ECO:0007669"/>
    <property type="project" value="InterPro"/>
</dbReference>
<dbReference type="GO" id="GO:0016114">
    <property type="term" value="P:terpenoid biosynthetic process"/>
    <property type="evidence" value="ECO:0007669"/>
    <property type="project" value="UniProtKB-UniPathway"/>
</dbReference>
<dbReference type="CDD" id="cd03784">
    <property type="entry name" value="GT1_Gtf-like"/>
    <property type="match status" value="1"/>
</dbReference>
<dbReference type="FunFam" id="3.40.50.2000:FF:000056">
    <property type="entry name" value="Glycosyltransferase"/>
    <property type="match status" value="1"/>
</dbReference>
<dbReference type="Gene3D" id="3.40.50.2000">
    <property type="entry name" value="Glycogen Phosphorylase B"/>
    <property type="match status" value="2"/>
</dbReference>
<dbReference type="InterPro" id="IPR050481">
    <property type="entry name" value="UDP-glycosyltransf_plant"/>
</dbReference>
<dbReference type="InterPro" id="IPR002213">
    <property type="entry name" value="UDP_glucos_trans"/>
</dbReference>
<dbReference type="PANTHER" id="PTHR48048">
    <property type="entry name" value="GLYCOSYLTRANSFERASE"/>
    <property type="match status" value="1"/>
</dbReference>
<dbReference type="PANTHER" id="PTHR48048:SF45">
    <property type="entry name" value="GLYCOSYLTRANSFERASE"/>
    <property type="match status" value="1"/>
</dbReference>
<dbReference type="Pfam" id="PF00201">
    <property type="entry name" value="UDPGT"/>
    <property type="match status" value="1"/>
</dbReference>
<dbReference type="SUPFAM" id="SSF53756">
    <property type="entry name" value="UDP-Glycosyltransferase/glycogen phosphorylase"/>
    <property type="match status" value="1"/>
</dbReference>